<accession>Q4QNL9</accession>
<organism>
    <name type="scientific">Haemophilus influenzae (strain 86-028NP)</name>
    <dbReference type="NCBI Taxonomy" id="281310"/>
    <lineage>
        <taxon>Bacteria</taxon>
        <taxon>Pseudomonadati</taxon>
        <taxon>Pseudomonadota</taxon>
        <taxon>Gammaproteobacteria</taxon>
        <taxon>Pasteurellales</taxon>
        <taxon>Pasteurellaceae</taxon>
        <taxon>Haemophilus</taxon>
    </lineage>
</organism>
<feature type="chain" id="PRO_0000314333" description="Carboxy-S-adenosyl-L-methionine synthase">
    <location>
        <begin position="1"/>
        <end position="241"/>
    </location>
</feature>
<feature type="binding site" evidence="1">
    <location>
        <position position="38"/>
    </location>
    <ligand>
        <name>S-adenosyl-L-methionine</name>
        <dbReference type="ChEBI" id="CHEBI:59789"/>
    </ligand>
</feature>
<feature type="binding site" evidence="1">
    <location>
        <begin position="63"/>
        <end position="65"/>
    </location>
    <ligand>
        <name>S-adenosyl-L-methionine</name>
        <dbReference type="ChEBI" id="CHEBI:59789"/>
    </ligand>
</feature>
<feature type="binding site" evidence="1">
    <location>
        <begin position="88"/>
        <end position="89"/>
    </location>
    <ligand>
        <name>S-adenosyl-L-methionine</name>
        <dbReference type="ChEBI" id="CHEBI:59789"/>
    </ligand>
</feature>
<feature type="binding site" evidence="1">
    <location>
        <begin position="116"/>
        <end position="117"/>
    </location>
    <ligand>
        <name>S-adenosyl-L-methionine</name>
        <dbReference type="ChEBI" id="CHEBI:59789"/>
    </ligand>
</feature>
<feature type="binding site" evidence="1">
    <location>
        <position position="131"/>
    </location>
    <ligand>
        <name>S-adenosyl-L-methionine</name>
        <dbReference type="ChEBI" id="CHEBI:59789"/>
    </ligand>
</feature>
<feature type="binding site" evidence="1">
    <location>
        <position position="198"/>
    </location>
    <ligand>
        <name>S-adenosyl-L-methionine</name>
        <dbReference type="ChEBI" id="CHEBI:59789"/>
    </ligand>
</feature>
<keyword id="KW-0949">S-adenosyl-L-methionine</keyword>
<keyword id="KW-0808">Transferase</keyword>
<dbReference type="EC" id="2.1.3.-" evidence="1"/>
<dbReference type="EMBL" id="CP000057">
    <property type="protein sequence ID" value="AAX87378.1"/>
    <property type="molecule type" value="Genomic_DNA"/>
</dbReference>
<dbReference type="RefSeq" id="WP_011271987.1">
    <property type="nucleotide sequence ID" value="NC_007146.2"/>
</dbReference>
<dbReference type="SMR" id="Q4QNL9"/>
<dbReference type="GeneID" id="93219269"/>
<dbReference type="KEGG" id="hit:NTHI0438"/>
<dbReference type="HOGENOM" id="CLU_078475_0_0_6"/>
<dbReference type="Proteomes" id="UP000002525">
    <property type="component" value="Chromosome"/>
</dbReference>
<dbReference type="GO" id="GO:0016743">
    <property type="term" value="F:carboxyl- or carbamoyltransferase activity"/>
    <property type="evidence" value="ECO:0007669"/>
    <property type="project" value="UniProtKB-UniRule"/>
</dbReference>
<dbReference type="GO" id="GO:1904047">
    <property type="term" value="F:S-adenosyl-L-methionine binding"/>
    <property type="evidence" value="ECO:0007669"/>
    <property type="project" value="UniProtKB-UniRule"/>
</dbReference>
<dbReference type="GO" id="GO:0002098">
    <property type="term" value="P:tRNA wobble uridine modification"/>
    <property type="evidence" value="ECO:0007669"/>
    <property type="project" value="InterPro"/>
</dbReference>
<dbReference type="CDD" id="cd02440">
    <property type="entry name" value="AdoMet_MTases"/>
    <property type="match status" value="1"/>
</dbReference>
<dbReference type="Gene3D" id="3.40.50.150">
    <property type="entry name" value="Vaccinia Virus protein VP39"/>
    <property type="match status" value="1"/>
</dbReference>
<dbReference type="HAMAP" id="MF_01589">
    <property type="entry name" value="Cx_SAM_synthase"/>
    <property type="match status" value="1"/>
</dbReference>
<dbReference type="InterPro" id="IPR005271">
    <property type="entry name" value="CmoA"/>
</dbReference>
<dbReference type="InterPro" id="IPR041698">
    <property type="entry name" value="Methyltransf_25"/>
</dbReference>
<dbReference type="InterPro" id="IPR029063">
    <property type="entry name" value="SAM-dependent_MTases_sf"/>
</dbReference>
<dbReference type="NCBIfam" id="TIGR00740">
    <property type="entry name" value="carboxy-S-adenosyl-L-methionine synthase CmoA"/>
    <property type="match status" value="1"/>
</dbReference>
<dbReference type="NCBIfam" id="NF011995">
    <property type="entry name" value="PRK15451.1"/>
    <property type="match status" value="1"/>
</dbReference>
<dbReference type="PANTHER" id="PTHR43861:SF2">
    <property type="entry name" value="CARBOXY-S-ADENOSYL-L-METHIONINE SYNTHASE"/>
    <property type="match status" value="1"/>
</dbReference>
<dbReference type="PANTHER" id="PTHR43861">
    <property type="entry name" value="TRANS-ACONITATE 2-METHYLTRANSFERASE-RELATED"/>
    <property type="match status" value="1"/>
</dbReference>
<dbReference type="Pfam" id="PF13649">
    <property type="entry name" value="Methyltransf_25"/>
    <property type="match status" value="1"/>
</dbReference>
<dbReference type="PIRSF" id="PIRSF006325">
    <property type="entry name" value="MeTrfase_bac"/>
    <property type="match status" value="1"/>
</dbReference>
<dbReference type="SUPFAM" id="SSF53335">
    <property type="entry name" value="S-adenosyl-L-methionine-dependent methyltransferases"/>
    <property type="match status" value="1"/>
</dbReference>
<sequence length="241" mass="27368">MVKDTLFSTPIAKLGDFIFDENVAEVFPDMIQRSVPGYSNIITAIGMLAERFVTADSNVYDLGCSRGAATLSARRNIHQPNVKIIGIDNSQPMVERCRQHIAAYHSEVPVEILCDDIRHVEIKNASMVILNFTLQFLPPEDRVALLTKIYEGLNPNGVLVLSEKFRFEDTKIDHLLIDLHHQFKRANGYSELEVSQKRTALENVMRTDSIETHKVRLKNVGFSQVELWFQCFNFGSMIAVK</sequence>
<comment type="function">
    <text evidence="1">Catalyzes the conversion of S-adenosyl-L-methionine (SAM) to carboxy-S-adenosyl-L-methionine (Cx-SAM).</text>
</comment>
<comment type="catalytic activity">
    <reaction evidence="1">
        <text>prephenate + S-adenosyl-L-methionine = carboxy-S-adenosyl-L-methionine + 3-phenylpyruvate + H2O</text>
        <dbReference type="Rhea" id="RHEA:51692"/>
        <dbReference type="ChEBI" id="CHEBI:15377"/>
        <dbReference type="ChEBI" id="CHEBI:18005"/>
        <dbReference type="ChEBI" id="CHEBI:29934"/>
        <dbReference type="ChEBI" id="CHEBI:59789"/>
        <dbReference type="ChEBI" id="CHEBI:134278"/>
    </reaction>
</comment>
<comment type="subunit">
    <text evidence="1">Homodimer.</text>
</comment>
<comment type="similarity">
    <text evidence="1">Belongs to the class I-like SAM-binding methyltransferase superfamily. Cx-SAM synthase family.</text>
</comment>
<evidence type="ECO:0000255" key="1">
    <source>
        <dbReference type="HAMAP-Rule" id="MF_01589"/>
    </source>
</evidence>
<protein>
    <recommendedName>
        <fullName evidence="1">Carboxy-S-adenosyl-L-methionine synthase</fullName>
        <shortName evidence="1">Cx-SAM synthase</shortName>
        <ecNumber evidence="1">2.1.3.-</ecNumber>
    </recommendedName>
</protein>
<reference key="1">
    <citation type="journal article" date="2005" name="J. Bacteriol.">
        <title>Genomic sequence of an otitis media isolate of nontypeable Haemophilus influenzae: comparative study with H. influenzae serotype d, strain KW20.</title>
        <authorList>
            <person name="Harrison A."/>
            <person name="Dyer D.W."/>
            <person name="Gillaspy A."/>
            <person name="Ray W.C."/>
            <person name="Mungur R."/>
            <person name="Carson M.B."/>
            <person name="Zhong H."/>
            <person name="Gipson J."/>
            <person name="Gipson M."/>
            <person name="Johnson L.S."/>
            <person name="Lewis L."/>
            <person name="Bakaletz L.O."/>
            <person name="Munson R.S. Jr."/>
        </authorList>
    </citation>
    <scope>NUCLEOTIDE SEQUENCE [LARGE SCALE GENOMIC DNA]</scope>
    <source>
        <strain>86-028NP</strain>
    </source>
</reference>
<name>CMOA_HAEI8</name>
<proteinExistence type="inferred from homology"/>
<gene>
    <name evidence="1" type="primary">cmoA</name>
    <name type="ordered locus">NTHI0438</name>
</gene>